<feature type="initiator methionine" description="Removed" evidence="1">
    <location>
        <position position="1"/>
    </location>
</feature>
<feature type="chain" id="PRO_0000083908" description="Heparin-binding hemagglutinin">
    <location>
        <begin position="2"/>
        <end position="199"/>
    </location>
</feature>
<feature type="region of interest" description="Disordered" evidence="2">
    <location>
        <begin position="162"/>
        <end position="199"/>
    </location>
</feature>
<feature type="compositionally biased region" description="Low complexity" evidence="2">
    <location>
        <begin position="162"/>
        <end position="180"/>
    </location>
</feature>
<feature type="compositionally biased region" description="Basic residues" evidence="2">
    <location>
        <begin position="181"/>
        <end position="199"/>
    </location>
</feature>
<keyword id="KW-0130">Cell adhesion</keyword>
<keyword id="KW-0325">Glycoprotein</keyword>
<keyword id="KW-0348">Hemagglutinin</keyword>
<keyword id="KW-0358">Heparin-binding</keyword>
<keyword id="KW-1185">Reference proteome</keyword>
<keyword id="KW-0843">Virulence</keyword>
<comment type="function">
    <text evidence="3">Required for extrapulmonary dissemination. Mediates adherence to epithelial cells by binding to sulfated glycoconjugates present at the surface of these cells; binds heparin, dextran sulfate, fucoidan and chondroitin sulfate. Promotes hemagglutination of erythrocytes of certain host species. Induces mycobacterial aggregation.</text>
</comment>
<comment type="subcellular location">
    <subcellularLocation>
        <location evidence="1">Cell surface</location>
    </subcellularLocation>
</comment>
<comment type="PTM">
    <text evidence="1">Glycosylated. Glycosylation may protect the protein from proteolytic degradation and be important for hemagglutination. It suggests that the carbohydrate moiety may be located within the C-terminal domain of HbhA (By similarity).</text>
</comment>
<comment type="similarity">
    <text evidence="4">To M.leprae HbhA.</text>
</comment>
<sequence length="199" mass="21534">MAENSNIDDIKAPLLAALGAADLALATVNELITNLRERAEETRTDTRSRVEESRARLTKLQEDLPEQLTELREKFTAEELRKAAEGYLEAATSRYNELVERGEAALERLRSQQSFEEVSARAEGYVDQAVELTQEALGTVASQTRAVGERAAKLVGIELPKKAAPAKKAAPAKKAAPAKKAAAKKAPAKKAAAKKVTQK</sequence>
<reference key="1">
    <citation type="journal article" date="2003" name="Proc. Natl. Acad. Sci. U.S.A.">
        <title>The complete genome sequence of Mycobacterium bovis.</title>
        <authorList>
            <person name="Garnier T."/>
            <person name="Eiglmeier K."/>
            <person name="Camus J.-C."/>
            <person name="Medina N."/>
            <person name="Mansoor H."/>
            <person name="Pryor M."/>
            <person name="Duthoy S."/>
            <person name="Grondin S."/>
            <person name="Lacroix C."/>
            <person name="Monsempe C."/>
            <person name="Simon S."/>
            <person name="Harris B."/>
            <person name="Atkin R."/>
            <person name="Doggett J."/>
            <person name="Mayes R."/>
            <person name="Keating L."/>
            <person name="Wheeler P.R."/>
            <person name="Parkhill J."/>
            <person name="Barrell B.G."/>
            <person name="Cole S.T."/>
            <person name="Gordon S.V."/>
            <person name="Hewinson R.G."/>
        </authorList>
    </citation>
    <scope>NUCLEOTIDE SEQUENCE [LARGE SCALE GENOMIC DNA]</scope>
    <source>
        <strain>ATCC BAA-935 / AF2122/97</strain>
    </source>
</reference>
<reference key="2">
    <citation type="journal article" date="2017" name="Genome Announc.">
        <title>Updated reference genome sequence and annotation of Mycobacterium bovis AF2122/97.</title>
        <authorList>
            <person name="Malone K.M."/>
            <person name="Farrell D."/>
            <person name="Stuber T.P."/>
            <person name="Schubert O.T."/>
            <person name="Aebersold R."/>
            <person name="Robbe-Austerman S."/>
            <person name="Gordon S.V."/>
        </authorList>
    </citation>
    <scope>NUCLEOTIDE SEQUENCE [LARGE SCALE GENOMIC DNA]</scope>
    <scope>GENOME REANNOTATION</scope>
    <source>
        <strain>ATCC BAA-935 / AF2122/97</strain>
    </source>
</reference>
<reference key="3">
    <citation type="journal article" date="2001" name="Nature">
        <title>The heparin-binding haemagglutinin of M. tuberculosis is required for extrapulmonary dissemination.</title>
        <authorList>
            <person name="Pethe K."/>
            <person name="Alonso S."/>
            <person name="Biet F."/>
            <person name="Delogu G."/>
            <person name="Brennan M.J."/>
            <person name="Locht C."/>
            <person name="Menozzi F.D."/>
        </authorList>
    </citation>
    <scope>FUNCTION</scope>
    <source>
        <strain>BCG</strain>
    </source>
</reference>
<evidence type="ECO:0000250" key="1"/>
<evidence type="ECO:0000256" key="2">
    <source>
        <dbReference type="SAM" id="MobiDB-lite"/>
    </source>
</evidence>
<evidence type="ECO:0000269" key="3">
    <source>
    </source>
</evidence>
<evidence type="ECO:0000305" key="4"/>
<proteinExistence type="inferred from homology"/>
<organism>
    <name type="scientific">Mycobacterium bovis (strain ATCC BAA-935 / AF2122/97)</name>
    <dbReference type="NCBI Taxonomy" id="233413"/>
    <lineage>
        <taxon>Bacteria</taxon>
        <taxon>Bacillati</taxon>
        <taxon>Actinomycetota</taxon>
        <taxon>Actinomycetes</taxon>
        <taxon>Mycobacteriales</taxon>
        <taxon>Mycobacteriaceae</taxon>
        <taxon>Mycobacterium</taxon>
        <taxon>Mycobacterium tuberculosis complex</taxon>
    </lineage>
</organism>
<gene>
    <name type="primary">hbhA</name>
    <name type="ordered locus">BQ2027_MB0485</name>
</gene>
<protein>
    <recommendedName>
        <fullName>Heparin-binding hemagglutinin</fullName>
    </recommendedName>
    <alternativeName>
        <fullName>Adhesin</fullName>
    </alternativeName>
</protein>
<name>HBHA_MYCBO</name>
<accession>P0C2T3</accession>
<accession>A0A1R3XVE5</accession>
<accession>O85733</accession>
<accession>P0A5P7</accession>
<accession>Q11142</accession>
<accession>X2BF49</accession>
<dbReference type="EMBL" id="LT708304">
    <property type="protein sequence ID" value="SIT99080.1"/>
    <property type="molecule type" value="Genomic_DNA"/>
</dbReference>
<dbReference type="RefSeq" id="NP_854148.1">
    <property type="nucleotide sequence ID" value="NC_002945.3"/>
</dbReference>
<dbReference type="RefSeq" id="WP_003402339.1">
    <property type="nucleotide sequence ID" value="NC_002945.4"/>
</dbReference>
<dbReference type="SMR" id="P0C2T3"/>
<dbReference type="GeneID" id="45424436"/>
<dbReference type="PATRIC" id="fig|233413.5.peg.527"/>
<dbReference type="Proteomes" id="UP000001419">
    <property type="component" value="Chromosome"/>
</dbReference>
<dbReference type="GO" id="GO:0009986">
    <property type="term" value="C:cell surface"/>
    <property type="evidence" value="ECO:0007669"/>
    <property type="project" value="UniProtKB-SubCell"/>
</dbReference>
<dbReference type="GO" id="GO:0008201">
    <property type="term" value="F:heparin binding"/>
    <property type="evidence" value="ECO:0007669"/>
    <property type="project" value="UniProtKB-KW"/>
</dbReference>
<dbReference type="GO" id="GO:0007155">
    <property type="term" value="P:cell adhesion"/>
    <property type="evidence" value="ECO:0007669"/>
    <property type="project" value="UniProtKB-KW"/>
</dbReference>
<dbReference type="Gene3D" id="1.20.5.1230">
    <property type="entry name" value="Apolipoprotein A-I"/>
    <property type="match status" value="1"/>
</dbReference>
<dbReference type="SUPFAM" id="SSF58113">
    <property type="entry name" value="Apolipoprotein A-I"/>
    <property type="match status" value="1"/>
</dbReference>